<name>ATG2_DEBHA</name>
<keyword id="KW-0072">Autophagy</keyword>
<keyword id="KW-0256">Endoplasmic reticulum</keyword>
<keyword id="KW-0445">Lipid transport</keyword>
<keyword id="KW-0472">Membrane</keyword>
<keyword id="KW-0653">Protein transport</keyword>
<keyword id="KW-1185">Reference proteome</keyword>
<keyword id="KW-0813">Transport</keyword>
<protein>
    <recommendedName>
        <fullName>Autophagy-related protein 2</fullName>
    </recommendedName>
</protein>
<reference key="1">
    <citation type="journal article" date="2004" name="Nature">
        <title>Genome evolution in yeasts.</title>
        <authorList>
            <person name="Dujon B."/>
            <person name="Sherman D."/>
            <person name="Fischer G."/>
            <person name="Durrens P."/>
            <person name="Casaregola S."/>
            <person name="Lafontaine I."/>
            <person name="de Montigny J."/>
            <person name="Marck C."/>
            <person name="Neuveglise C."/>
            <person name="Talla E."/>
            <person name="Goffard N."/>
            <person name="Frangeul L."/>
            <person name="Aigle M."/>
            <person name="Anthouard V."/>
            <person name="Babour A."/>
            <person name="Barbe V."/>
            <person name="Barnay S."/>
            <person name="Blanchin S."/>
            <person name="Beckerich J.-M."/>
            <person name="Beyne E."/>
            <person name="Bleykasten C."/>
            <person name="Boisrame A."/>
            <person name="Boyer J."/>
            <person name="Cattolico L."/>
            <person name="Confanioleri F."/>
            <person name="de Daruvar A."/>
            <person name="Despons L."/>
            <person name="Fabre E."/>
            <person name="Fairhead C."/>
            <person name="Ferry-Dumazet H."/>
            <person name="Groppi A."/>
            <person name="Hantraye F."/>
            <person name="Hennequin C."/>
            <person name="Jauniaux N."/>
            <person name="Joyet P."/>
            <person name="Kachouri R."/>
            <person name="Kerrest A."/>
            <person name="Koszul R."/>
            <person name="Lemaire M."/>
            <person name="Lesur I."/>
            <person name="Ma L."/>
            <person name="Muller H."/>
            <person name="Nicaud J.-M."/>
            <person name="Nikolski M."/>
            <person name="Oztas S."/>
            <person name="Ozier-Kalogeropoulos O."/>
            <person name="Pellenz S."/>
            <person name="Potier S."/>
            <person name="Richard G.-F."/>
            <person name="Straub M.-L."/>
            <person name="Suleau A."/>
            <person name="Swennen D."/>
            <person name="Tekaia F."/>
            <person name="Wesolowski-Louvel M."/>
            <person name="Westhof E."/>
            <person name="Wirth B."/>
            <person name="Zeniou-Meyer M."/>
            <person name="Zivanovic Y."/>
            <person name="Bolotin-Fukuhara M."/>
            <person name="Thierry A."/>
            <person name="Bouchier C."/>
            <person name="Caudron B."/>
            <person name="Scarpelli C."/>
            <person name="Gaillardin C."/>
            <person name="Weissenbach J."/>
            <person name="Wincker P."/>
            <person name="Souciet J.-L."/>
        </authorList>
    </citation>
    <scope>NUCLEOTIDE SEQUENCE [LARGE SCALE GENOMIC DNA]</scope>
    <source>
        <strain>ATCC 36239 / CBS 767 / BCRC 21394 / JCM 1990 / NBRC 0083 / IGC 2968</strain>
    </source>
</reference>
<feature type="chain" id="PRO_0000215830" description="Autophagy-related protein 2">
    <location>
        <begin position="1"/>
        <end position="1887"/>
    </location>
</feature>
<feature type="region of interest" description="Disordered" evidence="3">
    <location>
        <begin position="125"/>
        <end position="164"/>
    </location>
</feature>
<feature type="region of interest" description="Disordered" evidence="3">
    <location>
        <begin position="227"/>
        <end position="267"/>
    </location>
</feature>
<feature type="region of interest" description="Disordered" evidence="3">
    <location>
        <begin position="288"/>
        <end position="310"/>
    </location>
</feature>
<feature type="region of interest" description="Disordered" evidence="3">
    <location>
        <begin position="487"/>
        <end position="513"/>
    </location>
</feature>
<feature type="region of interest" description="Disordered" evidence="3">
    <location>
        <begin position="1188"/>
        <end position="1209"/>
    </location>
</feature>
<feature type="region of interest" description="Disordered" evidence="3">
    <location>
        <begin position="1260"/>
        <end position="1304"/>
    </location>
</feature>
<feature type="region of interest" description="Disordered" evidence="3">
    <location>
        <begin position="1659"/>
        <end position="1696"/>
    </location>
</feature>
<feature type="compositionally biased region" description="Low complexity" evidence="3">
    <location>
        <begin position="141"/>
        <end position="162"/>
    </location>
</feature>
<feature type="compositionally biased region" description="Acidic residues" evidence="3">
    <location>
        <begin position="253"/>
        <end position="265"/>
    </location>
</feature>
<feature type="compositionally biased region" description="Polar residues" evidence="3">
    <location>
        <begin position="288"/>
        <end position="303"/>
    </location>
</feature>
<feature type="compositionally biased region" description="Polar residues" evidence="3">
    <location>
        <begin position="487"/>
        <end position="498"/>
    </location>
</feature>
<feature type="compositionally biased region" description="Basic and acidic residues" evidence="3">
    <location>
        <begin position="1188"/>
        <end position="1200"/>
    </location>
</feature>
<feature type="compositionally biased region" description="Polar residues" evidence="3">
    <location>
        <begin position="1281"/>
        <end position="1291"/>
    </location>
</feature>
<dbReference type="EMBL" id="CR382135">
    <property type="protein sequence ID" value="CAR65584.1"/>
    <property type="molecule type" value="Genomic_DNA"/>
</dbReference>
<dbReference type="RefSeq" id="XP_002770221.1">
    <property type="nucleotide sequence ID" value="XM_002770175.1"/>
</dbReference>
<dbReference type="FunCoup" id="Q6BTX0">
    <property type="interactions" value="48"/>
</dbReference>
<dbReference type="STRING" id="284592.Q6BTX0"/>
<dbReference type="GeneID" id="8998392"/>
<dbReference type="KEGG" id="dha:DEHA2C15268g"/>
<dbReference type="VEuPathDB" id="FungiDB:DEHA2C15268g"/>
<dbReference type="eggNOG" id="KOG2993">
    <property type="taxonomic scope" value="Eukaryota"/>
</dbReference>
<dbReference type="HOGENOM" id="CLU_000626_3_0_1"/>
<dbReference type="InParanoid" id="Q6BTX0"/>
<dbReference type="OMA" id="YDWKYTR"/>
<dbReference type="OrthoDB" id="18982at2759"/>
<dbReference type="Proteomes" id="UP000000599">
    <property type="component" value="Chromosome C"/>
</dbReference>
<dbReference type="GO" id="GO:0005789">
    <property type="term" value="C:endoplasmic reticulum membrane"/>
    <property type="evidence" value="ECO:0007669"/>
    <property type="project" value="UniProtKB-SubCell"/>
</dbReference>
<dbReference type="GO" id="GO:0061908">
    <property type="term" value="C:phagophore"/>
    <property type="evidence" value="ECO:0007669"/>
    <property type="project" value="TreeGrafter"/>
</dbReference>
<dbReference type="GO" id="GO:0034045">
    <property type="term" value="C:phagophore assembly site membrane"/>
    <property type="evidence" value="ECO:0007669"/>
    <property type="project" value="UniProtKB-SubCell"/>
</dbReference>
<dbReference type="GO" id="GO:0032266">
    <property type="term" value="F:phosphatidylinositol-3-phosphate binding"/>
    <property type="evidence" value="ECO:0007669"/>
    <property type="project" value="TreeGrafter"/>
</dbReference>
<dbReference type="GO" id="GO:0043495">
    <property type="term" value="F:protein-membrane adaptor activity"/>
    <property type="evidence" value="ECO:0007669"/>
    <property type="project" value="TreeGrafter"/>
</dbReference>
<dbReference type="GO" id="GO:0000045">
    <property type="term" value="P:autophagosome assembly"/>
    <property type="evidence" value="ECO:0007669"/>
    <property type="project" value="TreeGrafter"/>
</dbReference>
<dbReference type="GO" id="GO:0000422">
    <property type="term" value="P:autophagy of mitochondrion"/>
    <property type="evidence" value="ECO:0007669"/>
    <property type="project" value="TreeGrafter"/>
</dbReference>
<dbReference type="GO" id="GO:0061723">
    <property type="term" value="P:glycophagy"/>
    <property type="evidence" value="ECO:0007669"/>
    <property type="project" value="TreeGrafter"/>
</dbReference>
<dbReference type="GO" id="GO:0006869">
    <property type="term" value="P:lipid transport"/>
    <property type="evidence" value="ECO:0007669"/>
    <property type="project" value="UniProtKB-KW"/>
</dbReference>
<dbReference type="GO" id="GO:0034727">
    <property type="term" value="P:piecemeal microautophagy of the nucleus"/>
    <property type="evidence" value="ECO:0007669"/>
    <property type="project" value="TreeGrafter"/>
</dbReference>
<dbReference type="GO" id="GO:0015031">
    <property type="term" value="P:protein transport"/>
    <property type="evidence" value="ECO:0007669"/>
    <property type="project" value="UniProtKB-KW"/>
</dbReference>
<dbReference type="GO" id="GO:0061709">
    <property type="term" value="P:reticulophagy"/>
    <property type="evidence" value="ECO:0007669"/>
    <property type="project" value="TreeGrafter"/>
</dbReference>
<dbReference type="InterPro" id="IPR026849">
    <property type="entry name" value="ATG2"/>
</dbReference>
<dbReference type="PANTHER" id="PTHR13190">
    <property type="entry name" value="AUTOPHAGY-RELATED 2, ISOFORM A"/>
    <property type="match status" value="1"/>
</dbReference>
<dbReference type="PANTHER" id="PTHR13190:SF1">
    <property type="entry name" value="AUTOPHAGY-RELATED 2, ISOFORM A"/>
    <property type="match status" value="1"/>
</dbReference>
<dbReference type="Pfam" id="PF13329">
    <property type="entry name" value="ATG2_CAD"/>
    <property type="match status" value="1"/>
</dbReference>
<organism>
    <name type="scientific">Debaryomyces hansenii (strain ATCC 36239 / CBS 767 / BCRC 21394 / JCM 1990 / NBRC 0083 / IGC 2968)</name>
    <name type="common">Yeast</name>
    <name type="synonym">Torulaspora hansenii</name>
    <dbReference type="NCBI Taxonomy" id="284592"/>
    <lineage>
        <taxon>Eukaryota</taxon>
        <taxon>Fungi</taxon>
        <taxon>Dikarya</taxon>
        <taxon>Ascomycota</taxon>
        <taxon>Saccharomycotina</taxon>
        <taxon>Pichiomycetes</taxon>
        <taxon>Debaryomycetaceae</taxon>
        <taxon>Debaryomyces</taxon>
    </lineage>
</organism>
<comment type="function">
    <text evidence="2">Lipid transfer protein required for autophagosome completion and peroxisome degradation. Tethers the edge of the isolation membrane (IM) to the endoplasmic reticulum (ER) and mediates direct lipid transfer from ER to IM for IM expansion. ATG2 binds to the ER exit site (ERES), which is the membrane source for autophagosome formation, using basic residues in its N-terminal region (NR) and to the expanding edge of the IM through its C-terminal region. The latter binding is assisted by an ATG18-PtdIns3P interaction. ATG2 then extracts phospholipids from the membrane source using its NR and transfers them to ATG9 to the IM through its predicted beta-sheet-rich structure for membrane expansion.</text>
</comment>
<comment type="catalytic activity">
    <reaction evidence="1">
        <text>a 1,2-diacyl-sn-glycero-3-phosphocholine(in) = a 1,2-diacyl-sn-glycero-3-phosphocholine(out)</text>
        <dbReference type="Rhea" id="RHEA:38571"/>
        <dbReference type="ChEBI" id="CHEBI:57643"/>
    </reaction>
</comment>
<comment type="catalytic activity">
    <reaction evidence="1">
        <text>a 1,2-diacyl-sn-glycero-3-phospho-L-serine(in) = a 1,2-diacyl-sn-glycero-3-phospho-L-serine(out)</text>
        <dbReference type="Rhea" id="RHEA:38663"/>
        <dbReference type="ChEBI" id="CHEBI:57262"/>
    </reaction>
</comment>
<comment type="catalytic activity">
    <reaction evidence="1">
        <text>a 1,2-diacyl-sn-glycero-3-phosphoethanolamine(in) = a 1,2-diacyl-sn-glycero-3-phosphoethanolamine(out)</text>
        <dbReference type="Rhea" id="RHEA:38895"/>
        <dbReference type="ChEBI" id="CHEBI:64612"/>
    </reaction>
</comment>
<comment type="subcellular location">
    <subcellularLocation>
        <location evidence="2">Preautophagosomal structure membrane</location>
        <topology evidence="2">Peripheral membrane protein</topology>
    </subcellularLocation>
    <subcellularLocation>
        <location evidence="2">Endoplasmic reticulum membrane</location>
        <topology evidence="2">Peripheral membrane protein</topology>
    </subcellularLocation>
</comment>
<comment type="similarity">
    <text evidence="4">Belongs to the ATG2 family.</text>
</comment>
<accession>Q6BTX0</accession>
<accession>B5RTC2</accession>
<evidence type="ECO:0000250" key="1">
    <source>
        <dbReference type="UniProtKB" id="O94649"/>
    </source>
</evidence>
<evidence type="ECO:0000250" key="2">
    <source>
        <dbReference type="UniProtKB" id="P53855"/>
    </source>
</evidence>
<evidence type="ECO:0000256" key="3">
    <source>
        <dbReference type="SAM" id="MobiDB-lite"/>
    </source>
</evidence>
<evidence type="ECO:0000305" key="4"/>
<proteinExistence type="inferred from homology"/>
<sequence length="1887" mass="210749">MSPQWMPQNIQKRLLLYVLQQLSLFSEIDLPNLEEVSLNNIVLKNVSIDPDKVGKLPGCNLRYGQVGSLELNGGVMGGVSIDANNVEIVIAPDFDMKEEISNNVQFSLAQSTADLANTLMVDKSSNEYESSDDETDTVMPSVSSKSRSNSSSSGTSARTRPSALSGVMTKAVEMALSRLQVKVTNLNIKIVSESTDLVLKVDEALLNTINGTRHVKIKGVKLITLKPEVNPGESSDDSPEQESPKESENSNTSDDDEDNDNDYGDESLMNSMVFTHDEASSIYMSATSQSFNKPSNNDDTAPTETAPDNKESPILLHIDDIDIEFEGLSNITNLEIDVGEIKVAAVPITPTIISIFNNISHNLKLKYYQQRKSNIHKQRFKSNLSFPQYADDNDEIEDENEQMPILDDNGASSGPFFDKLRIHNIIVSATSALLPTGQFASASNSLNFIFHNLNIKYKNEALIYGGIEVFKIVKITNDQEIEVLKFNNSTAPTNTEPNPSDEPAGSTSAPSNSSKADIRFEAFTKLDNEIKHLEFTSLFSKQAFVNLDKSVLLLLSNFGISVSSIYDSYNTMRSTMNSVNSFKANTNINGEPRDASSIGVAKESNLQIILQTASTTINIKLSDNLNLKAVIYPISFNLLKQGMSINKILISTVSSGIETLISTLSNIQLSTKSQEFKSFSNKSGYSKGSNDSFPRETILGSNLTLSLSKISSKASLKELKLLIGDFADFASSWQLLSLQVNSLKNSVKDKGFVMSSKSNKNESSSMLSNSMYFNQRRSRRSNFNNPSLVNTNRSNLVSFRLYVDHIEFCITNVLPKLGDFDFQLEKVSFYKLNNDIQGSIHTVKVDRNLGNGEAVNDFIYEFQRKRCNKINIPLILVNIKSNDKANTIDISLRNFLIEYYTRWLELLEKEIDENAVLHDITGQKRESSSLNSPSKRLDIRFSLYDCVIGLNPGRLDCKSLLIINKGNSDVTFGLHQFYIKSSLRNLSLLIIDDVKNINLSKTDREAASKPTSTAYISPLSWFTSIGYISVGNINCIHLGITVNTGIQEIIERNEKLGLQDNLALLDIKINSDEHQLDLCADSAHVLIQMINDLKPPLSFTDEEKIKVTVNDPINLLDEIGQNVFLNESIMKSASHSETFENSTISRKNSDANDINIVEEYYDGSHTSSQSLENGFNKLSISESDNAKDDASSFSFDEEHFSSNGADRNNTEVFPIKMNINLSKTKIYLYDGFDWKGTRKTIKGAVKRVEAQALQELERVKEHGSRKHLKRNMQVTFDEPESNATEDNYGNDQENDDGNSSDNQSLIGETLFQSIHLSVPKGSNPSSLTKNINKSVQNYFDNEDSNDSSINYNVETGRNYKNLKLRRSKNHKISIDLKNIEVNMAILTTRDPRRDKDVPDVKYEVTNSIDLRIEDIDIYDNIPNSTWNKFLSYMNSLGEREIGTSMLKASITNVRPNPELCSTEAMIDISILPIRLHVDQDALDFFIRFFDFKDKRFELPIDEIIYIQMFKMSSIKLKLDYKPKKIDYSGIRSGKVSEFVNFFILDGSELSLPKLTLYGILGMPMLGAELTKTWAPNIQQTQLSGLLAGLSPFRSIVNIGGGFKDLVAVPIKEYRKDGRLMRSLQKGTSKFAKTTGYELLNLGAKLASGTQVVLEQSEQVFGGEGSSARSPKNKNDKHGKIEDDDNEDIYTSGNTSKGNSNLLASSQLLNKTIAVDNDPYGKKKLYSYIELDESDDIDDKILENSLLLMNPKDIKESRQLQVVSEESELQELDEKEELDDEDAIKLVSLYSNQPENTQQGLKLAYKSLGENFEITKKAVNNLRKELNASSNVQESLKSMVKSSPILIIRPMIGTTEALSKALMGISNEIDSNHIIESKDKYRYDASEK</sequence>
<gene>
    <name type="primary">ATG2</name>
    <name type="ordered locus">DEHA2C15268g</name>
</gene>